<evidence type="ECO:0000255" key="1">
    <source>
        <dbReference type="HAMAP-Rule" id="MF_00255"/>
    </source>
</evidence>
<sequence>MTQQTFLVEIGTEELPPKALRSLAESFAANFTAELDNANLSHGEVSWYAAPRRLAVKVANLSAAQADREVEKRGPAIAQAFDAEGKPSKAAEGWARGCGITVDQAERLVTDKGEWLLYRAHVKGQPAQLLLAGMVNTALSKLPIPKLMRWGDKETQFVRPVHTVTLLLGTEVIPGTVLGINSDRVIRGHRFMGEAEFTIDSADQYPQILLERGKVIADYELRKSIIKRDAEQAAQQIGGVADLSESLLEEVASLVEWPVVLTAKFEEKFLAVPAEALVYTMKGDQKYFPVYDTAGHLMPHFIFVANIESKDPQQIISGNEKVVRPRLADAEFFFKTDRKKRLEDNLPRLETVLFQQQLGTLRDKTDRIQALAGWVAAQIGADVNHATRAGLLSKCDLMTNMVFEFTDTQGVMGMHYARHDGEAEDVAVALNEQYQPRFAGDDLPSNPVACALAIADKMDTLAGIFGIGQHPKGDKDPFALRRAALGVLRIIVEKNLSLDLQTLTEEAVRLYGSKLTNAKVVDDVIEFMLGRFRAWYQDEGHSVDTIQAVLARRPTKPADFDARVKAVTYFRTLDAAAALAAANKRVSNILAKSTDTLNDHVHASILKEPAELKLATHLVVLRDQLEPVFAAGQYKEALVELAALRETVDEFFESVMVMAEDDAVRVNRLTLLSKLRELFLQVADISLLQ</sequence>
<proteinExistence type="inferred from homology"/>
<dbReference type="EC" id="6.1.1.14" evidence="1"/>
<dbReference type="EMBL" id="CP000668">
    <property type="protein sequence ID" value="ABP38450.1"/>
    <property type="molecule type" value="Genomic_DNA"/>
</dbReference>
<dbReference type="RefSeq" id="WP_002209623.1">
    <property type="nucleotide sequence ID" value="NZ_CP009715.1"/>
</dbReference>
<dbReference type="SMR" id="A4TGN7"/>
<dbReference type="GeneID" id="57974645"/>
<dbReference type="KEGG" id="ypp:YPDSF_0023"/>
<dbReference type="PATRIC" id="fig|386656.14.peg.553"/>
<dbReference type="GO" id="GO:0005829">
    <property type="term" value="C:cytosol"/>
    <property type="evidence" value="ECO:0007669"/>
    <property type="project" value="TreeGrafter"/>
</dbReference>
<dbReference type="GO" id="GO:0004814">
    <property type="term" value="F:arginine-tRNA ligase activity"/>
    <property type="evidence" value="ECO:0007669"/>
    <property type="project" value="InterPro"/>
</dbReference>
<dbReference type="GO" id="GO:0005524">
    <property type="term" value="F:ATP binding"/>
    <property type="evidence" value="ECO:0007669"/>
    <property type="project" value="UniProtKB-UniRule"/>
</dbReference>
<dbReference type="GO" id="GO:0004820">
    <property type="term" value="F:glycine-tRNA ligase activity"/>
    <property type="evidence" value="ECO:0007669"/>
    <property type="project" value="UniProtKB-UniRule"/>
</dbReference>
<dbReference type="GO" id="GO:0006420">
    <property type="term" value="P:arginyl-tRNA aminoacylation"/>
    <property type="evidence" value="ECO:0007669"/>
    <property type="project" value="InterPro"/>
</dbReference>
<dbReference type="GO" id="GO:0006426">
    <property type="term" value="P:glycyl-tRNA aminoacylation"/>
    <property type="evidence" value="ECO:0007669"/>
    <property type="project" value="UniProtKB-UniRule"/>
</dbReference>
<dbReference type="HAMAP" id="MF_00255">
    <property type="entry name" value="Gly_tRNA_synth_beta"/>
    <property type="match status" value="1"/>
</dbReference>
<dbReference type="InterPro" id="IPR008909">
    <property type="entry name" value="DALR_anticod-bd"/>
</dbReference>
<dbReference type="InterPro" id="IPR015944">
    <property type="entry name" value="Gly-tRNA-synth_bsu"/>
</dbReference>
<dbReference type="InterPro" id="IPR006194">
    <property type="entry name" value="Gly-tRNA-synth_heterodimer"/>
</dbReference>
<dbReference type="NCBIfam" id="TIGR00211">
    <property type="entry name" value="glyS"/>
    <property type="match status" value="1"/>
</dbReference>
<dbReference type="PANTHER" id="PTHR30075:SF2">
    <property type="entry name" value="GLYCINE--TRNA LIGASE, CHLOROPLASTIC_MITOCHONDRIAL 2"/>
    <property type="match status" value="1"/>
</dbReference>
<dbReference type="PANTHER" id="PTHR30075">
    <property type="entry name" value="GLYCYL-TRNA SYNTHETASE"/>
    <property type="match status" value="1"/>
</dbReference>
<dbReference type="Pfam" id="PF05746">
    <property type="entry name" value="DALR_1"/>
    <property type="match status" value="1"/>
</dbReference>
<dbReference type="Pfam" id="PF02092">
    <property type="entry name" value="tRNA_synt_2f"/>
    <property type="match status" value="1"/>
</dbReference>
<dbReference type="PRINTS" id="PR01045">
    <property type="entry name" value="TRNASYNTHGB"/>
</dbReference>
<dbReference type="SUPFAM" id="SSF109604">
    <property type="entry name" value="HD-domain/PDEase-like"/>
    <property type="match status" value="1"/>
</dbReference>
<dbReference type="PROSITE" id="PS50861">
    <property type="entry name" value="AA_TRNA_LIGASE_II_GLYAB"/>
    <property type="match status" value="1"/>
</dbReference>
<reference key="1">
    <citation type="submission" date="2007-02" db="EMBL/GenBank/DDBJ databases">
        <title>Complete sequence of chromosome of Yersinia pestis Pestoides F.</title>
        <authorList>
            <consortium name="US DOE Joint Genome Institute"/>
            <person name="Copeland A."/>
            <person name="Lucas S."/>
            <person name="Lapidus A."/>
            <person name="Barry K."/>
            <person name="Detter J.C."/>
            <person name="Glavina del Rio T."/>
            <person name="Hammon N."/>
            <person name="Israni S."/>
            <person name="Dalin E."/>
            <person name="Tice H."/>
            <person name="Pitluck S."/>
            <person name="Di Bartolo G."/>
            <person name="Chain P."/>
            <person name="Malfatti S."/>
            <person name="Shin M."/>
            <person name="Vergez L."/>
            <person name="Schmutz J."/>
            <person name="Larimer F."/>
            <person name="Land M."/>
            <person name="Hauser L."/>
            <person name="Worsham P."/>
            <person name="Chu M."/>
            <person name="Bearden S."/>
            <person name="Garcia E."/>
            <person name="Richardson P."/>
        </authorList>
    </citation>
    <scope>NUCLEOTIDE SEQUENCE [LARGE SCALE GENOMIC DNA]</scope>
    <source>
        <strain>Pestoides F</strain>
    </source>
</reference>
<accession>A4TGN7</accession>
<organism>
    <name type="scientific">Yersinia pestis (strain Pestoides F)</name>
    <dbReference type="NCBI Taxonomy" id="386656"/>
    <lineage>
        <taxon>Bacteria</taxon>
        <taxon>Pseudomonadati</taxon>
        <taxon>Pseudomonadota</taxon>
        <taxon>Gammaproteobacteria</taxon>
        <taxon>Enterobacterales</taxon>
        <taxon>Yersiniaceae</taxon>
        <taxon>Yersinia</taxon>
    </lineage>
</organism>
<keyword id="KW-0030">Aminoacyl-tRNA synthetase</keyword>
<keyword id="KW-0067">ATP-binding</keyword>
<keyword id="KW-0963">Cytoplasm</keyword>
<keyword id="KW-0436">Ligase</keyword>
<keyword id="KW-0547">Nucleotide-binding</keyword>
<keyword id="KW-0648">Protein biosynthesis</keyword>
<gene>
    <name evidence="1" type="primary">glyS</name>
    <name type="ordered locus">YPDSF_0023</name>
</gene>
<comment type="catalytic activity">
    <reaction evidence="1">
        <text>tRNA(Gly) + glycine + ATP = glycyl-tRNA(Gly) + AMP + diphosphate</text>
        <dbReference type="Rhea" id="RHEA:16013"/>
        <dbReference type="Rhea" id="RHEA-COMP:9664"/>
        <dbReference type="Rhea" id="RHEA-COMP:9683"/>
        <dbReference type="ChEBI" id="CHEBI:30616"/>
        <dbReference type="ChEBI" id="CHEBI:33019"/>
        <dbReference type="ChEBI" id="CHEBI:57305"/>
        <dbReference type="ChEBI" id="CHEBI:78442"/>
        <dbReference type="ChEBI" id="CHEBI:78522"/>
        <dbReference type="ChEBI" id="CHEBI:456215"/>
        <dbReference type="EC" id="6.1.1.14"/>
    </reaction>
</comment>
<comment type="subunit">
    <text evidence="1">Tetramer of two alpha and two beta subunits.</text>
</comment>
<comment type="subcellular location">
    <subcellularLocation>
        <location evidence="1">Cytoplasm</location>
    </subcellularLocation>
</comment>
<comment type="similarity">
    <text evidence="1">Belongs to the class-II aminoacyl-tRNA synthetase family.</text>
</comment>
<name>SYGB_YERPP</name>
<feature type="chain" id="PRO_1000006425" description="Glycine--tRNA ligase beta subunit">
    <location>
        <begin position="1"/>
        <end position="689"/>
    </location>
</feature>
<protein>
    <recommendedName>
        <fullName evidence="1">Glycine--tRNA ligase beta subunit</fullName>
        <ecNumber evidence="1">6.1.1.14</ecNumber>
    </recommendedName>
    <alternativeName>
        <fullName evidence="1">Glycyl-tRNA synthetase beta subunit</fullName>
        <shortName evidence="1">GlyRS</shortName>
    </alternativeName>
</protein>